<protein>
    <recommendedName>
        <fullName evidence="1">Large ribosomal subunit protein uL14</fullName>
    </recommendedName>
    <alternativeName>
        <fullName evidence="2">50S ribosomal protein L14</fullName>
    </alternativeName>
</protein>
<feature type="chain" id="PRO_1000055688" description="Large ribosomal subunit protein uL14">
    <location>
        <begin position="1"/>
        <end position="122"/>
    </location>
</feature>
<keyword id="KW-0687">Ribonucleoprotein</keyword>
<keyword id="KW-0689">Ribosomal protein</keyword>
<keyword id="KW-0694">RNA-binding</keyword>
<keyword id="KW-0699">rRNA-binding</keyword>
<reference key="1">
    <citation type="submission" date="2007-04" db="EMBL/GenBank/DDBJ databases">
        <title>Complete sequence of chromosome of Rhodobacter sphaeroides ATCC 17025.</title>
        <authorList>
            <consortium name="US DOE Joint Genome Institute"/>
            <person name="Copeland A."/>
            <person name="Lucas S."/>
            <person name="Lapidus A."/>
            <person name="Barry K."/>
            <person name="Detter J.C."/>
            <person name="Glavina del Rio T."/>
            <person name="Hammon N."/>
            <person name="Israni S."/>
            <person name="Dalin E."/>
            <person name="Tice H."/>
            <person name="Pitluck S."/>
            <person name="Chertkov O."/>
            <person name="Brettin T."/>
            <person name="Bruce D."/>
            <person name="Han C."/>
            <person name="Schmutz J."/>
            <person name="Larimer F."/>
            <person name="Land M."/>
            <person name="Hauser L."/>
            <person name="Kyrpides N."/>
            <person name="Kim E."/>
            <person name="Richardson P."/>
            <person name="Mackenzie C."/>
            <person name="Choudhary M."/>
            <person name="Donohue T.J."/>
            <person name="Kaplan S."/>
        </authorList>
    </citation>
    <scope>NUCLEOTIDE SEQUENCE [LARGE SCALE GENOMIC DNA]</scope>
    <source>
        <strain>ATCC 17025 / ATH 2.4.3</strain>
    </source>
</reference>
<organism>
    <name type="scientific">Cereibacter sphaeroides (strain ATCC 17025 / ATH 2.4.3)</name>
    <name type="common">Rhodobacter sphaeroides</name>
    <dbReference type="NCBI Taxonomy" id="349102"/>
    <lineage>
        <taxon>Bacteria</taxon>
        <taxon>Pseudomonadati</taxon>
        <taxon>Pseudomonadota</taxon>
        <taxon>Alphaproteobacteria</taxon>
        <taxon>Rhodobacterales</taxon>
        <taxon>Paracoccaceae</taxon>
        <taxon>Cereibacter</taxon>
    </lineage>
</organism>
<comment type="function">
    <text evidence="1">Binds to 23S rRNA. Forms part of two intersubunit bridges in the 70S ribosome.</text>
</comment>
<comment type="subunit">
    <text evidence="1">Part of the 50S ribosomal subunit. Forms a cluster with proteins L3 and L19. In the 70S ribosome, L14 and L19 interact and together make contacts with the 16S rRNA in bridges B5 and B8.</text>
</comment>
<comment type="similarity">
    <text evidence="1">Belongs to the universal ribosomal protein uL14 family.</text>
</comment>
<name>RL14_CERS5</name>
<sequence>MIQMQTNLDVADNSGARRVQCIKVLGGSHRRYASVGDIIVVSVKEAIPRGRVKKGDVRKAVVVRTAKEVRREDGTTIRFDRNAAVILNNQGEPVGTRIFGPVVRELRAKNFMKIISLAPEVL</sequence>
<evidence type="ECO:0000255" key="1">
    <source>
        <dbReference type="HAMAP-Rule" id="MF_01367"/>
    </source>
</evidence>
<evidence type="ECO:0000305" key="2"/>
<proteinExistence type="inferred from homology"/>
<accession>A4WVJ8</accession>
<dbReference type="EMBL" id="CP000661">
    <property type="protein sequence ID" value="ABP71412.1"/>
    <property type="molecule type" value="Genomic_DNA"/>
</dbReference>
<dbReference type="SMR" id="A4WVJ8"/>
<dbReference type="STRING" id="349102.Rsph17025_2524"/>
<dbReference type="KEGG" id="rsq:Rsph17025_2524"/>
<dbReference type="eggNOG" id="COG0093">
    <property type="taxonomic scope" value="Bacteria"/>
</dbReference>
<dbReference type="HOGENOM" id="CLU_095071_2_1_5"/>
<dbReference type="BioCyc" id="RSPH349102:G1G8M-2602-MONOMER"/>
<dbReference type="GO" id="GO:0022625">
    <property type="term" value="C:cytosolic large ribosomal subunit"/>
    <property type="evidence" value="ECO:0007669"/>
    <property type="project" value="TreeGrafter"/>
</dbReference>
<dbReference type="GO" id="GO:0070180">
    <property type="term" value="F:large ribosomal subunit rRNA binding"/>
    <property type="evidence" value="ECO:0007669"/>
    <property type="project" value="TreeGrafter"/>
</dbReference>
<dbReference type="GO" id="GO:0003735">
    <property type="term" value="F:structural constituent of ribosome"/>
    <property type="evidence" value="ECO:0007669"/>
    <property type="project" value="InterPro"/>
</dbReference>
<dbReference type="GO" id="GO:0006412">
    <property type="term" value="P:translation"/>
    <property type="evidence" value="ECO:0007669"/>
    <property type="project" value="UniProtKB-UniRule"/>
</dbReference>
<dbReference type="CDD" id="cd00337">
    <property type="entry name" value="Ribosomal_uL14"/>
    <property type="match status" value="1"/>
</dbReference>
<dbReference type="FunFam" id="2.40.150.20:FF:000001">
    <property type="entry name" value="50S ribosomal protein L14"/>
    <property type="match status" value="1"/>
</dbReference>
<dbReference type="Gene3D" id="2.40.150.20">
    <property type="entry name" value="Ribosomal protein L14"/>
    <property type="match status" value="1"/>
</dbReference>
<dbReference type="HAMAP" id="MF_01367">
    <property type="entry name" value="Ribosomal_uL14"/>
    <property type="match status" value="1"/>
</dbReference>
<dbReference type="InterPro" id="IPR000218">
    <property type="entry name" value="Ribosomal_uL14"/>
</dbReference>
<dbReference type="InterPro" id="IPR005745">
    <property type="entry name" value="Ribosomal_uL14_bac-type"/>
</dbReference>
<dbReference type="InterPro" id="IPR019972">
    <property type="entry name" value="Ribosomal_uL14_CS"/>
</dbReference>
<dbReference type="InterPro" id="IPR036853">
    <property type="entry name" value="Ribosomal_uL14_sf"/>
</dbReference>
<dbReference type="NCBIfam" id="TIGR01067">
    <property type="entry name" value="rplN_bact"/>
    <property type="match status" value="1"/>
</dbReference>
<dbReference type="PANTHER" id="PTHR11761">
    <property type="entry name" value="50S/60S RIBOSOMAL PROTEIN L14/L23"/>
    <property type="match status" value="1"/>
</dbReference>
<dbReference type="PANTHER" id="PTHR11761:SF3">
    <property type="entry name" value="LARGE RIBOSOMAL SUBUNIT PROTEIN UL14M"/>
    <property type="match status" value="1"/>
</dbReference>
<dbReference type="Pfam" id="PF00238">
    <property type="entry name" value="Ribosomal_L14"/>
    <property type="match status" value="1"/>
</dbReference>
<dbReference type="SMART" id="SM01374">
    <property type="entry name" value="Ribosomal_L14"/>
    <property type="match status" value="1"/>
</dbReference>
<dbReference type="SUPFAM" id="SSF50193">
    <property type="entry name" value="Ribosomal protein L14"/>
    <property type="match status" value="1"/>
</dbReference>
<dbReference type="PROSITE" id="PS00049">
    <property type="entry name" value="RIBOSOMAL_L14"/>
    <property type="match status" value="1"/>
</dbReference>
<gene>
    <name evidence="1" type="primary">rplN</name>
    <name type="ordered locus">Rsph17025_2524</name>
</gene>